<proteinExistence type="inferred from homology"/>
<protein>
    <recommendedName>
        <fullName evidence="1">Urease accessory protein UreG</fullName>
    </recommendedName>
</protein>
<dbReference type="EMBL" id="CP000551">
    <property type="protein sequence ID" value="ABM70173.1"/>
    <property type="molecule type" value="Genomic_DNA"/>
</dbReference>
<dbReference type="RefSeq" id="WP_011818330.1">
    <property type="nucleotide sequence ID" value="NC_008816.1"/>
</dbReference>
<dbReference type="SMR" id="A2BQW2"/>
<dbReference type="STRING" id="146891.A9601_08891"/>
<dbReference type="KEGG" id="pmb:A9601_08891"/>
<dbReference type="eggNOG" id="COG0378">
    <property type="taxonomic scope" value="Bacteria"/>
</dbReference>
<dbReference type="HOGENOM" id="CLU_072144_1_0_3"/>
<dbReference type="OrthoDB" id="9802035at2"/>
<dbReference type="Proteomes" id="UP000002590">
    <property type="component" value="Chromosome"/>
</dbReference>
<dbReference type="GO" id="GO:0005737">
    <property type="term" value="C:cytoplasm"/>
    <property type="evidence" value="ECO:0007669"/>
    <property type="project" value="UniProtKB-SubCell"/>
</dbReference>
<dbReference type="GO" id="GO:0005525">
    <property type="term" value="F:GTP binding"/>
    <property type="evidence" value="ECO:0007669"/>
    <property type="project" value="UniProtKB-KW"/>
</dbReference>
<dbReference type="GO" id="GO:0003924">
    <property type="term" value="F:GTPase activity"/>
    <property type="evidence" value="ECO:0007669"/>
    <property type="project" value="InterPro"/>
</dbReference>
<dbReference type="GO" id="GO:0016151">
    <property type="term" value="F:nickel cation binding"/>
    <property type="evidence" value="ECO:0007669"/>
    <property type="project" value="UniProtKB-UniRule"/>
</dbReference>
<dbReference type="GO" id="GO:0043419">
    <property type="term" value="P:urea catabolic process"/>
    <property type="evidence" value="ECO:0007669"/>
    <property type="project" value="InterPro"/>
</dbReference>
<dbReference type="CDD" id="cd05540">
    <property type="entry name" value="UreG"/>
    <property type="match status" value="1"/>
</dbReference>
<dbReference type="FunFam" id="3.40.50.300:FF:000208">
    <property type="entry name" value="Urease accessory protein UreG"/>
    <property type="match status" value="1"/>
</dbReference>
<dbReference type="Gene3D" id="3.40.50.300">
    <property type="entry name" value="P-loop containing nucleotide triphosphate hydrolases"/>
    <property type="match status" value="1"/>
</dbReference>
<dbReference type="HAMAP" id="MF_01389">
    <property type="entry name" value="UreG"/>
    <property type="match status" value="1"/>
</dbReference>
<dbReference type="InterPro" id="IPR003495">
    <property type="entry name" value="CobW/HypB/UreG_nucleotide-bd"/>
</dbReference>
<dbReference type="InterPro" id="IPR027417">
    <property type="entry name" value="P-loop_NTPase"/>
</dbReference>
<dbReference type="InterPro" id="IPR004400">
    <property type="entry name" value="UreG"/>
</dbReference>
<dbReference type="NCBIfam" id="TIGR00101">
    <property type="entry name" value="ureG"/>
    <property type="match status" value="1"/>
</dbReference>
<dbReference type="PANTHER" id="PTHR31715">
    <property type="entry name" value="UREASE ACCESSORY PROTEIN G"/>
    <property type="match status" value="1"/>
</dbReference>
<dbReference type="PANTHER" id="PTHR31715:SF0">
    <property type="entry name" value="UREASE ACCESSORY PROTEIN G"/>
    <property type="match status" value="1"/>
</dbReference>
<dbReference type="Pfam" id="PF02492">
    <property type="entry name" value="cobW"/>
    <property type="match status" value="1"/>
</dbReference>
<dbReference type="PIRSF" id="PIRSF005624">
    <property type="entry name" value="Ni-bind_GTPase"/>
    <property type="match status" value="1"/>
</dbReference>
<dbReference type="SUPFAM" id="SSF52540">
    <property type="entry name" value="P-loop containing nucleoside triphosphate hydrolases"/>
    <property type="match status" value="1"/>
</dbReference>
<comment type="function">
    <text evidence="1">Facilitates the functional incorporation of the urease nickel metallocenter. This process requires GTP hydrolysis, probably effectuated by UreG.</text>
</comment>
<comment type="subunit">
    <text evidence="1">Homodimer. UreD, UreF and UreG form a complex that acts as a GTP-hydrolysis-dependent molecular chaperone, activating the urease apoprotein by helping to assemble the nickel containing metallocenter of UreC. The UreE protein probably delivers the nickel.</text>
</comment>
<comment type="subcellular location">
    <subcellularLocation>
        <location evidence="1">Cytoplasm</location>
    </subcellularLocation>
</comment>
<comment type="similarity">
    <text evidence="1">Belongs to the SIMIBI class G3E GTPase family. UreG subfamily.</text>
</comment>
<accession>A2BQW2</accession>
<sequence length="203" mass="22140">MSSKLRVGVAGPVGSGKTALVETLCLSMNKNYEIAVVTNDIYTKEDANFLINKKVLEEGRIIGVETGGCPHTAIREDCSLNKNAVLDLENKYNPLDFVFVESGGDNLASSFSPELVDLSIYVIDVSAGDKIPRKGGPGITRSDLLLINKIDLADKVGADLNIMKSDTEFMRKGKPWFFTNLSSGMGVEEIIQFLESHIPNNRN</sequence>
<organism>
    <name type="scientific">Prochlorococcus marinus (strain AS9601)</name>
    <dbReference type="NCBI Taxonomy" id="146891"/>
    <lineage>
        <taxon>Bacteria</taxon>
        <taxon>Bacillati</taxon>
        <taxon>Cyanobacteriota</taxon>
        <taxon>Cyanophyceae</taxon>
        <taxon>Synechococcales</taxon>
        <taxon>Prochlorococcaceae</taxon>
        <taxon>Prochlorococcus</taxon>
    </lineage>
</organism>
<name>UREG_PROMS</name>
<gene>
    <name evidence="1" type="primary">ureG</name>
    <name type="ordered locus">A9601_08891</name>
</gene>
<reference key="1">
    <citation type="journal article" date="2007" name="PLoS Genet.">
        <title>Patterns and implications of gene gain and loss in the evolution of Prochlorococcus.</title>
        <authorList>
            <person name="Kettler G.C."/>
            <person name="Martiny A.C."/>
            <person name="Huang K."/>
            <person name="Zucker J."/>
            <person name="Coleman M.L."/>
            <person name="Rodrigue S."/>
            <person name="Chen F."/>
            <person name="Lapidus A."/>
            <person name="Ferriera S."/>
            <person name="Johnson J."/>
            <person name="Steglich C."/>
            <person name="Church G.M."/>
            <person name="Richardson P."/>
            <person name="Chisholm S.W."/>
        </authorList>
    </citation>
    <scope>NUCLEOTIDE SEQUENCE [LARGE SCALE GENOMIC DNA]</scope>
    <source>
        <strain>AS9601</strain>
    </source>
</reference>
<feature type="chain" id="PRO_0000347415" description="Urease accessory protein UreG">
    <location>
        <begin position="1"/>
        <end position="203"/>
    </location>
</feature>
<feature type="binding site" evidence="1">
    <location>
        <begin position="11"/>
        <end position="18"/>
    </location>
    <ligand>
        <name>GTP</name>
        <dbReference type="ChEBI" id="CHEBI:37565"/>
    </ligand>
</feature>
<evidence type="ECO:0000255" key="1">
    <source>
        <dbReference type="HAMAP-Rule" id="MF_01389"/>
    </source>
</evidence>
<keyword id="KW-0143">Chaperone</keyword>
<keyword id="KW-0963">Cytoplasm</keyword>
<keyword id="KW-0342">GTP-binding</keyword>
<keyword id="KW-0996">Nickel insertion</keyword>
<keyword id="KW-0547">Nucleotide-binding</keyword>